<name>RUVB_HELHP</name>
<reference key="1">
    <citation type="journal article" date="2003" name="Proc. Natl. Acad. Sci. U.S.A.">
        <title>The complete genome sequence of the carcinogenic bacterium Helicobacter hepaticus.</title>
        <authorList>
            <person name="Suerbaum S."/>
            <person name="Josenhans C."/>
            <person name="Sterzenbach T."/>
            <person name="Drescher B."/>
            <person name="Brandt P."/>
            <person name="Bell M."/>
            <person name="Droege M."/>
            <person name="Fartmann B."/>
            <person name="Fischer H.-P."/>
            <person name="Ge Z."/>
            <person name="Hoerster A."/>
            <person name="Holland R."/>
            <person name="Klein K."/>
            <person name="Koenig J."/>
            <person name="Macko L."/>
            <person name="Mendz G.L."/>
            <person name="Nyakatura G."/>
            <person name="Schauer D.B."/>
            <person name="Shen Z."/>
            <person name="Weber J."/>
            <person name="Frosch M."/>
            <person name="Fox J.G."/>
        </authorList>
    </citation>
    <scope>NUCLEOTIDE SEQUENCE [LARGE SCALE GENOMIC DNA]</scope>
    <source>
        <strain>ATCC 51449 / 3B1</strain>
    </source>
</reference>
<comment type="function">
    <text evidence="1">The RuvA-RuvB-RuvC complex processes Holliday junction (HJ) DNA during genetic recombination and DNA repair, while the RuvA-RuvB complex plays an important role in the rescue of blocked DNA replication forks via replication fork reversal (RFR). RuvA specifically binds to HJ cruciform DNA, conferring on it an open structure. The RuvB hexamer acts as an ATP-dependent pump, pulling dsDNA into and through the RuvAB complex. RuvB forms 2 homohexamers on either side of HJ DNA bound by 1 or 2 RuvA tetramers; 4 subunits per hexamer contact DNA at a time. Coordinated motions by a converter formed by DNA-disengaged RuvB subunits stimulates ATP hydrolysis and nucleotide exchange. Immobilization of the converter enables RuvB to convert the ATP-contained energy into a lever motion, pulling 2 nucleotides of DNA out of the RuvA tetramer per ATP hydrolyzed, thus driving DNA branch migration. The RuvB motors rotate together with the DNA substrate, which together with the progressing nucleotide cycle form the mechanistic basis for DNA recombination by continuous HJ branch migration. Branch migration allows RuvC to scan DNA until it finds its consensus sequence, where it cleaves and resolves cruciform DNA.</text>
</comment>
<comment type="catalytic activity">
    <reaction evidence="1">
        <text>ATP + H2O = ADP + phosphate + H(+)</text>
        <dbReference type="Rhea" id="RHEA:13065"/>
        <dbReference type="ChEBI" id="CHEBI:15377"/>
        <dbReference type="ChEBI" id="CHEBI:15378"/>
        <dbReference type="ChEBI" id="CHEBI:30616"/>
        <dbReference type="ChEBI" id="CHEBI:43474"/>
        <dbReference type="ChEBI" id="CHEBI:456216"/>
    </reaction>
</comment>
<comment type="subunit">
    <text evidence="1">Homohexamer. Forms an RuvA(8)-RuvB(12)-Holliday junction (HJ) complex. HJ DNA is sandwiched between 2 RuvA tetramers; dsDNA enters through RuvA and exits via RuvB. An RuvB hexamer assembles on each DNA strand where it exits the tetramer. Each RuvB hexamer is contacted by two RuvA subunits (via domain III) on 2 adjacent RuvB subunits; this complex drives branch migration. In the full resolvosome a probable DNA-RuvA(4)-RuvB(12)-RuvC(2) complex forms which resolves the HJ.</text>
</comment>
<comment type="subcellular location">
    <subcellularLocation>
        <location evidence="1">Cytoplasm</location>
    </subcellularLocation>
</comment>
<comment type="domain">
    <text evidence="1">Has 3 domains, the large (RuvB-L) and small ATPase (RuvB-S) domains and the C-terminal head (RuvB-H) domain. The head domain binds DNA, while the ATPase domains jointly bind ATP, ADP or are empty depending on the state of the subunit in the translocation cycle. During a single DNA translocation step the structure of each domain remains the same, but their relative positions change.</text>
</comment>
<comment type="similarity">
    <text evidence="1">Belongs to the RuvB family.</text>
</comment>
<feature type="chain" id="PRO_0000165539" description="Holliday junction branch migration complex subunit RuvB">
    <location>
        <begin position="1"/>
        <end position="336"/>
    </location>
</feature>
<feature type="region of interest" description="Large ATPase domain (RuvB-L)" evidence="1">
    <location>
        <begin position="1"/>
        <end position="175"/>
    </location>
</feature>
<feature type="region of interest" description="Small ATPAse domain (RuvB-S)" evidence="1">
    <location>
        <begin position="176"/>
        <end position="253"/>
    </location>
</feature>
<feature type="region of interest" description="Head domain (RuvB-H)" evidence="1">
    <location>
        <begin position="256"/>
        <end position="336"/>
    </location>
</feature>
<feature type="binding site" evidence="1">
    <location>
        <position position="14"/>
    </location>
    <ligand>
        <name>ATP</name>
        <dbReference type="ChEBI" id="CHEBI:30616"/>
    </ligand>
</feature>
<feature type="binding site" evidence="1">
    <location>
        <position position="15"/>
    </location>
    <ligand>
        <name>ATP</name>
        <dbReference type="ChEBI" id="CHEBI:30616"/>
    </ligand>
</feature>
<feature type="binding site" evidence="1">
    <location>
        <position position="56"/>
    </location>
    <ligand>
        <name>ATP</name>
        <dbReference type="ChEBI" id="CHEBI:30616"/>
    </ligand>
</feature>
<feature type="binding site" evidence="1">
    <location>
        <position position="59"/>
    </location>
    <ligand>
        <name>ATP</name>
        <dbReference type="ChEBI" id="CHEBI:30616"/>
    </ligand>
</feature>
<feature type="binding site" evidence="1">
    <location>
        <position position="60"/>
    </location>
    <ligand>
        <name>ATP</name>
        <dbReference type="ChEBI" id="CHEBI:30616"/>
    </ligand>
</feature>
<feature type="binding site" evidence="1">
    <location>
        <position position="60"/>
    </location>
    <ligand>
        <name>Mg(2+)</name>
        <dbReference type="ChEBI" id="CHEBI:18420"/>
    </ligand>
</feature>
<feature type="binding site" evidence="1">
    <location>
        <position position="61"/>
    </location>
    <ligand>
        <name>ATP</name>
        <dbReference type="ChEBI" id="CHEBI:30616"/>
    </ligand>
</feature>
<feature type="binding site" evidence="1">
    <location>
        <begin position="122"/>
        <end position="124"/>
    </location>
    <ligand>
        <name>ATP</name>
        <dbReference type="ChEBI" id="CHEBI:30616"/>
    </ligand>
</feature>
<feature type="binding site" evidence="1">
    <location>
        <position position="165"/>
    </location>
    <ligand>
        <name>ATP</name>
        <dbReference type="ChEBI" id="CHEBI:30616"/>
    </ligand>
</feature>
<feature type="binding site" evidence="1">
    <location>
        <position position="175"/>
    </location>
    <ligand>
        <name>ATP</name>
        <dbReference type="ChEBI" id="CHEBI:30616"/>
    </ligand>
</feature>
<feature type="binding site" evidence="1">
    <location>
        <position position="212"/>
    </location>
    <ligand>
        <name>ATP</name>
        <dbReference type="ChEBI" id="CHEBI:30616"/>
    </ligand>
</feature>
<feature type="binding site" evidence="1">
    <location>
        <position position="310"/>
    </location>
    <ligand>
        <name>DNA</name>
        <dbReference type="ChEBI" id="CHEBI:16991"/>
    </ligand>
</feature>
<feature type="binding site" evidence="1">
    <location>
        <position position="315"/>
    </location>
    <ligand>
        <name>DNA</name>
        <dbReference type="ChEBI" id="CHEBI:16991"/>
    </ligand>
</feature>
<keyword id="KW-0067">ATP-binding</keyword>
<keyword id="KW-0963">Cytoplasm</keyword>
<keyword id="KW-0227">DNA damage</keyword>
<keyword id="KW-0233">DNA recombination</keyword>
<keyword id="KW-0234">DNA repair</keyword>
<keyword id="KW-0238">DNA-binding</keyword>
<keyword id="KW-0378">Hydrolase</keyword>
<keyword id="KW-0547">Nucleotide-binding</keyword>
<keyword id="KW-1185">Reference proteome</keyword>
<evidence type="ECO:0000255" key="1">
    <source>
        <dbReference type="HAMAP-Rule" id="MF_00016"/>
    </source>
</evidence>
<protein>
    <recommendedName>
        <fullName evidence="1">Holliday junction branch migration complex subunit RuvB</fullName>
        <ecNumber evidence="1">3.6.4.-</ecNumber>
    </recommendedName>
</protein>
<sequence>MEKYSFESVQELSLRPNVWEEYIGQEKIKKNLKVFIEASKKRKECLDHILFFGPPGLGKTTLSHIIAHEMGCNIKVSAAPMIEKSGDLAAILTNLNEGDILFIDEIHRLSPAIEEILYPAMEDFRLDIIIGSGPAAQTLKIDLAPFTLIGATTRAGMLSNPLRDRFGMSFRLQFYEPKELSAIVICASSKLGRSLSKSGADEIARRSRGTPRIALRLLRRVRDFADVGEYAQDMRNQSEISLECVRYALNELGVNELGFDELDLRYLAILAESRGKAIGLNTIAAAMSEDEATIEDVIEPYLLANGYLERTAKGRVASPKTYELLHIPFLEQKGLF</sequence>
<organism>
    <name type="scientific">Helicobacter hepaticus (strain ATCC 51449 / 3B1)</name>
    <dbReference type="NCBI Taxonomy" id="235279"/>
    <lineage>
        <taxon>Bacteria</taxon>
        <taxon>Pseudomonadati</taxon>
        <taxon>Campylobacterota</taxon>
        <taxon>Epsilonproteobacteria</taxon>
        <taxon>Campylobacterales</taxon>
        <taxon>Helicobacteraceae</taxon>
        <taxon>Helicobacter</taxon>
    </lineage>
</organism>
<accession>Q7VIU8</accession>
<gene>
    <name evidence="1" type="primary">ruvB</name>
    <name type="ordered locus">HH_0506</name>
</gene>
<proteinExistence type="inferred from homology"/>
<dbReference type="EC" id="3.6.4.-" evidence="1"/>
<dbReference type="EMBL" id="AE017125">
    <property type="protein sequence ID" value="AAP77103.1"/>
    <property type="molecule type" value="Genomic_DNA"/>
</dbReference>
<dbReference type="SMR" id="Q7VIU8"/>
<dbReference type="STRING" id="235279.HH_0506"/>
<dbReference type="KEGG" id="hhe:HH_0506"/>
<dbReference type="eggNOG" id="COG2255">
    <property type="taxonomic scope" value="Bacteria"/>
</dbReference>
<dbReference type="HOGENOM" id="CLU_055599_1_0_7"/>
<dbReference type="Proteomes" id="UP000002495">
    <property type="component" value="Chromosome"/>
</dbReference>
<dbReference type="GO" id="GO:0005737">
    <property type="term" value="C:cytoplasm"/>
    <property type="evidence" value="ECO:0007669"/>
    <property type="project" value="UniProtKB-SubCell"/>
</dbReference>
<dbReference type="GO" id="GO:0048476">
    <property type="term" value="C:Holliday junction resolvase complex"/>
    <property type="evidence" value="ECO:0007669"/>
    <property type="project" value="UniProtKB-UniRule"/>
</dbReference>
<dbReference type="GO" id="GO:0005524">
    <property type="term" value="F:ATP binding"/>
    <property type="evidence" value="ECO:0007669"/>
    <property type="project" value="UniProtKB-UniRule"/>
</dbReference>
<dbReference type="GO" id="GO:0016887">
    <property type="term" value="F:ATP hydrolysis activity"/>
    <property type="evidence" value="ECO:0007669"/>
    <property type="project" value="InterPro"/>
</dbReference>
<dbReference type="GO" id="GO:0000400">
    <property type="term" value="F:four-way junction DNA binding"/>
    <property type="evidence" value="ECO:0007669"/>
    <property type="project" value="UniProtKB-UniRule"/>
</dbReference>
<dbReference type="GO" id="GO:0009378">
    <property type="term" value="F:four-way junction helicase activity"/>
    <property type="evidence" value="ECO:0007669"/>
    <property type="project" value="InterPro"/>
</dbReference>
<dbReference type="GO" id="GO:0006310">
    <property type="term" value="P:DNA recombination"/>
    <property type="evidence" value="ECO:0007669"/>
    <property type="project" value="UniProtKB-UniRule"/>
</dbReference>
<dbReference type="GO" id="GO:0006281">
    <property type="term" value="P:DNA repair"/>
    <property type="evidence" value="ECO:0007669"/>
    <property type="project" value="UniProtKB-UniRule"/>
</dbReference>
<dbReference type="CDD" id="cd00009">
    <property type="entry name" value="AAA"/>
    <property type="match status" value="1"/>
</dbReference>
<dbReference type="Gene3D" id="1.10.8.60">
    <property type="match status" value="1"/>
</dbReference>
<dbReference type="Gene3D" id="3.40.50.300">
    <property type="entry name" value="P-loop containing nucleotide triphosphate hydrolases"/>
    <property type="match status" value="1"/>
</dbReference>
<dbReference type="Gene3D" id="1.10.10.10">
    <property type="entry name" value="Winged helix-like DNA-binding domain superfamily/Winged helix DNA-binding domain"/>
    <property type="match status" value="1"/>
</dbReference>
<dbReference type="HAMAP" id="MF_00016">
    <property type="entry name" value="DNA_HJ_migration_RuvB"/>
    <property type="match status" value="1"/>
</dbReference>
<dbReference type="InterPro" id="IPR003593">
    <property type="entry name" value="AAA+_ATPase"/>
</dbReference>
<dbReference type="InterPro" id="IPR041445">
    <property type="entry name" value="AAA_lid_4"/>
</dbReference>
<dbReference type="InterPro" id="IPR004605">
    <property type="entry name" value="DNA_helicase_Holl-junc_RuvB"/>
</dbReference>
<dbReference type="InterPro" id="IPR027417">
    <property type="entry name" value="P-loop_NTPase"/>
</dbReference>
<dbReference type="InterPro" id="IPR008824">
    <property type="entry name" value="RuvB-like_N"/>
</dbReference>
<dbReference type="InterPro" id="IPR008823">
    <property type="entry name" value="RuvB_C"/>
</dbReference>
<dbReference type="InterPro" id="IPR036388">
    <property type="entry name" value="WH-like_DNA-bd_sf"/>
</dbReference>
<dbReference type="InterPro" id="IPR036390">
    <property type="entry name" value="WH_DNA-bd_sf"/>
</dbReference>
<dbReference type="NCBIfam" id="NF000868">
    <property type="entry name" value="PRK00080.1"/>
    <property type="match status" value="1"/>
</dbReference>
<dbReference type="NCBIfam" id="TIGR00635">
    <property type="entry name" value="ruvB"/>
    <property type="match status" value="1"/>
</dbReference>
<dbReference type="PANTHER" id="PTHR42848">
    <property type="match status" value="1"/>
</dbReference>
<dbReference type="PANTHER" id="PTHR42848:SF1">
    <property type="entry name" value="HOLLIDAY JUNCTION BRANCH MIGRATION COMPLEX SUBUNIT RUVB"/>
    <property type="match status" value="1"/>
</dbReference>
<dbReference type="Pfam" id="PF17864">
    <property type="entry name" value="AAA_lid_4"/>
    <property type="match status" value="1"/>
</dbReference>
<dbReference type="Pfam" id="PF05491">
    <property type="entry name" value="RuvB_C"/>
    <property type="match status" value="1"/>
</dbReference>
<dbReference type="Pfam" id="PF05496">
    <property type="entry name" value="RuvB_N"/>
    <property type="match status" value="1"/>
</dbReference>
<dbReference type="SMART" id="SM00382">
    <property type="entry name" value="AAA"/>
    <property type="match status" value="1"/>
</dbReference>
<dbReference type="SUPFAM" id="SSF52540">
    <property type="entry name" value="P-loop containing nucleoside triphosphate hydrolases"/>
    <property type="match status" value="1"/>
</dbReference>
<dbReference type="SUPFAM" id="SSF46785">
    <property type="entry name" value="Winged helix' DNA-binding domain"/>
    <property type="match status" value="1"/>
</dbReference>